<sequence>MTLTLRVITPDKTVWDDSVEEIVLPSTTGQVGVLTGHAPLLTALDTGVMRVRPGKDWQAIALMGGFAEVENNEVKVLVNGAEVGDSIDKETARTEFQQAEQNLARANQGDNRQELIQATQEFKKARARFQAAGGMT</sequence>
<feature type="chain" id="PRO_0000188175" description="ATP synthase epsilon chain">
    <location>
        <begin position="1"/>
        <end position="136"/>
    </location>
</feature>
<proteinExistence type="inferred from homology"/>
<dbReference type="EMBL" id="M86384">
    <property type="protein sequence ID" value="AAA25557.1"/>
    <property type="molecule type" value="Genomic_DNA"/>
</dbReference>
<dbReference type="PIR" id="B42697">
    <property type="entry name" value="B42697"/>
</dbReference>
<dbReference type="SMR" id="P50010"/>
<dbReference type="GO" id="GO:0031676">
    <property type="term" value="C:plasma membrane-derived thylakoid membrane"/>
    <property type="evidence" value="ECO:0007669"/>
    <property type="project" value="UniProtKB-SubCell"/>
</dbReference>
<dbReference type="GO" id="GO:0045259">
    <property type="term" value="C:proton-transporting ATP synthase complex"/>
    <property type="evidence" value="ECO:0007669"/>
    <property type="project" value="UniProtKB-KW"/>
</dbReference>
<dbReference type="GO" id="GO:0005524">
    <property type="term" value="F:ATP binding"/>
    <property type="evidence" value="ECO:0007669"/>
    <property type="project" value="UniProtKB-UniRule"/>
</dbReference>
<dbReference type="GO" id="GO:0046933">
    <property type="term" value="F:proton-transporting ATP synthase activity, rotational mechanism"/>
    <property type="evidence" value="ECO:0007669"/>
    <property type="project" value="UniProtKB-UniRule"/>
</dbReference>
<dbReference type="CDD" id="cd12152">
    <property type="entry name" value="F1-ATPase_delta"/>
    <property type="match status" value="1"/>
</dbReference>
<dbReference type="Gene3D" id="2.60.15.10">
    <property type="entry name" value="F0F1 ATP synthase delta/epsilon subunit, N-terminal"/>
    <property type="match status" value="1"/>
</dbReference>
<dbReference type="Gene3D" id="1.10.287.540">
    <property type="entry name" value="Helix hairpin bin"/>
    <property type="match status" value="1"/>
</dbReference>
<dbReference type="HAMAP" id="MF_00530">
    <property type="entry name" value="ATP_synth_epsil_bac"/>
    <property type="match status" value="1"/>
</dbReference>
<dbReference type="InterPro" id="IPR001469">
    <property type="entry name" value="ATP_synth_F1_dsu/esu"/>
</dbReference>
<dbReference type="InterPro" id="IPR020546">
    <property type="entry name" value="ATP_synth_F1_dsu/esu_N"/>
</dbReference>
<dbReference type="InterPro" id="IPR020547">
    <property type="entry name" value="ATP_synth_F1_esu_C"/>
</dbReference>
<dbReference type="InterPro" id="IPR036771">
    <property type="entry name" value="ATPsynth_dsu/esu_N"/>
</dbReference>
<dbReference type="NCBIfam" id="TIGR01216">
    <property type="entry name" value="ATP_synt_epsi"/>
    <property type="match status" value="1"/>
</dbReference>
<dbReference type="PANTHER" id="PTHR13822">
    <property type="entry name" value="ATP SYNTHASE DELTA/EPSILON CHAIN"/>
    <property type="match status" value="1"/>
</dbReference>
<dbReference type="PANTHER" id="PTHR13822:SF10">
    <property type="entry name" value="ATP SYNTHASE EPSILON CHAIN, CHLOROPLASTIC"/>
    <property type="match status" value="1"/>
</dbReference>
<dbReference type="Pfam" id="PF00401">
    <property type="entry name" value="ATP-synt_DE"/>
    <property type="match status" value="1"/>
</dbReference>
<dbReference type="Pfam" id="PF02823">
    <property type="entry name" value="ATP-synt_DE_N"/>
    <property type="match status" value="1"/>
</dbReference>
<dbReference type="SUPFAM" id="SSF51344">
    <property type="entry name" value="Epsilon subunit of F1F0-ATP synthase N-terminal domain"/>
    <property type="match status" value="1"/>
</dbReference>
<reference key="1">
    <citation type="journal article" date="1992" name="Proc. Natl. Acad. Sci. U.S.A.">
        <title>Sequence of Prochloron didemni atpBE and the inference of chloroplast origins.</title>
        <authorList>
            <person name="Lockhart P.J."/>
            <person name="Beanland T.J."/>
            <person name="Howe C.J."/>
            <person name="Larkum A.W."/>
        </authorList>
    </citation>
    <scope>NUCLEOTIDE SEQUENCE [GENOMIC DNA]</scope>
</reference>
<comment type="function">
    <text evidence="1">Produces ATP from ADP in the presence of a proton gradient across the membrane.</text>
</comment>
<comment type="subunit">
    <text>F-type ATPases have 2 components, CF(1) - the catalytic core - and CF(0) - the membrane proton channel. CF(1) has five subunits: alpha(3), beta(3), gamma(1), delta(1), epsilon(1). CF(0) has three main subunits: a, b and c.</text>
</comment>
<comment type="subcellular location">
    <subcellularLocation>
        <location evidence="1">Cellular thylakoid membrane</location>
        <topology evidence="1">Peripheral membrane protein</topology>
    </subcellularLocation>
</comment>
<comment type="similarity">
    <text evidence="2">Belongs to the ATPase epsilon chain family.</text>
</comment>
<evidence type="ECO:0000250" key="1"/>
<evidence type="ECO:0000305" key="2"/>
<name>ATPE_PRODI</name>
<organism>
    <name type="scientific">Prochloron didemni</name>
    <dbReference type="NCBI Taxonomy" id="1216"/>
    <lineage>
        <taxon>Bacteria</taxon>
        <taxon>Bacillati</taxon>
        <taxon>Cyanobacteriota</taxon>
        <taxon>Cyanophyceae</taxon>
        <taxon>Synechococcales</taxon>
        <taxon>Prochloraceae</taxon>
        <taxon>Prochloron</taxon>
    </lineage>
</organism>
<protein>
    <recommendedName>
        <fullName>ATP synthase epsilon chain</fullName>
    </recommendedName>
    <alternativeName>
        <fullName>ATP synthase F1 sector epsilon subunit</fullName>
    </alternativeName>
    <alternativeName>
        <fullName>F-ATPase epsilon subunit</fullName>
    </alternativeName>
</protein>
<gene>
    <name type="primary">atpC</name>
    <name type="synonym">atpE</name>
</gene>
<accession>P50010</accession>
<keyword id="KW-0066">ATP synthesis</keyword>
<keyword id="KW-0139">CF(1)</keyword>
<keyword id="KW-0375">Hydrogen ion transport</keyword>
<keyword id="KW-0406">Ion transport</keyword>
<keyword id="KW-0472">Membrane</keyword>
<keyword id="KW-0793">Thylakoid</keyword>
<keyword id="KW-0813">Transport</keyword>